<protein>
    <recommendedName>
        <fullName>Glycoprotein</fullName>
    </recommendedName>
</protein>
<dbReference type="EMBL" id="D26175">
    <property type="protein sequence ID" value="BAA05163.1"/>
    <property type="molecule type" value="Genomic_RNA"/>
</dbReference>
<dbReference type="SMR" id="Q85213"/>
<dbReference type="GlyCosmos" id="Q85213">
    <property type="glycosylation" value="2 sites, No reported glycans"/>
</dbReference>
<dbReference type="OrthoDB" id="21147at10239"/>
<dbReference type="GO" id="GO:0033644">
    <property type="term" value="C:host cell membrane"/>
    <property type="evidence" value="ECO:0007669"/>
    <property type="project" value="UniProtKB-SubCell"/>
</dbReference>
<dbReference type="GO" id="GO:0016020">
    <property type="term" value="C:membrane"/>
    <property type="evidence" value="ECO:0007669"/>
    <property type="project" value="UniProtKB-KW"/>
</dbReference>
<dbReference type="GO" id="GO:0019031">
    <property type="term" value="C:viral envelope"/>
    <property type="evidence" value="ECO:0007669"/>
    <property type="project" value="UniProtKB-KW"/>
</dbReference>
<dbReference type="GO" id="GO:0055036">
    <property type="term" value="C:virion membrane"/>
    <property type="evidence" value="ECO:0007669"/>
    <property type="project" value="UniProtKB-SubCell"/>
</dbReference>
<dbReference type="GO" id="GO:0046718">
    <property type="term" value="P:symbiont entry into host cell"/>
    <property type="evidence" value="ECO:0007669"/>
    <property type="project" value="UniProtKB-KW"/>
</dbReference>
<dbReference type="GO" id="GO:0019062">
    <property type="term" value="P:virion attachment to host cell"/>
    <property type="evidence" value="ECO:0007669"/>
    <property type="project" value="UniProtKB-KW"/>
</dbReference>
<dbReference type="Gene3D" id="2.30.29.130">
    <property type="match status" value="1"/>
</dbReference>
<dbReference type="Gene3D" id="2.30.30.640">
    <property type="match status" value="1"/>
</dbReference>
<dbReference type="InterPro" id="IPR055447">
    <property type="entry name" value="Rhabdo_glycop_CD"/>
</dbReference>
<dbReference type="InterPro" id="IPR001903">
    <property type="entry name" value="Rhabdo_glycop_FD"/>
</dbReference>
<dbReference type="Pfam" id="PF24833">
    <property type="entry name" value="Rhabdo_glycop_CD"/>
    <property type="match status" value="1"/>
</dbReference>
<dbReference type="Pfam" id="PF00974">
    <property type="entry name" value="Rhabdo_glycop_FD"/>
    <property type="match status" value="1"/>
</dbReference>
<dbReference type="SUPFAM" id="SSF161008">
    <property type="entry name" value="Viral glycoprotein ectodomain-like"/>
    <property type="match status" value="1"/>
</dbReference>
<reference key="1">
    <citation type="journal article" date="1992" name="Nucleic Acids Res.">
        <title>The phosphoprotein (P) gene of the rhabdovirus Piry: its cloning, sequencing, and expression in Escherichia coli.</title>
        <authorList>
            <person name="Barik S."/>
        </authorList>
    </citation>
    <scope>NUCLEOTIDE SEQUENCE [GENOMIC RNA]</scope>
</reference>
<reference key="2">
    <citation type="journal article" date="1995" name="Intervirology">
        <title>The relationship of Piry virus to other vesiculoviruses: a re-evaluation based on the glycoprotein gene sequence.</title>
        <authorList>
            <person name="Brun G."/>
            <person name="Bao X."/>
            <person name="Prevec L."/>
        </authorList>
    </citation>
    <scope>NUCLEOTIDE SEQUENCE [GENOMIC RNA]</scope>
</reference>
<evidence type="ECO:0000250" key="1"/>
<evidence type="ECO:0000250" key="2">
    <source>
        <dbReference type="UniProtKB" id="P03522"/>
    </source>
</evidence>
<evidence type="ECO:0000250" key="3">
    <source>
        <dbReference type="UniProtKB" id="P0C2X0"/>
    </source>
</evidence>
<evidence type="ECO:0000255" key="4"/>
<evidence type="ECO:0000305" key="5"/>
<organismHost>
    <name type="scientific">Gracilinanus microtarsus</name>
    <name type="common">Brazilian gracile mouse opossum</name>
    <dbReference type="NCBI Taxonomy" id="126289"/>
</organismHost>
<sequence length="529" mass="59771">MDLFPILVVVLMTDTVLGKFQIVFPDQNELEWRPVVGDSRHCPQSSEMQFDGSRSQTILTGKAPVGITPSKSDGFICHAAKWVTTCDFRWYGPKYITHSIHHLRPTTSDCETALQRYKDGSLINLGFPPESCGYATVTDSEAMLVQVTPHHVGVDDYRGHWIDPLFPGGECSTNFCDTVHNSSVWIPKSQKTDICAQSFKNIKMTASYPSEGALVSDRFAFHSAYHPNMPGSTVCIMDFCEQKGLRFTNGEWMGLNVEQSIREKKISAIFPNCVAGTEIRATLESEGARTLTWETQRMLDYSLCQNTWDKVSRKEPLSPLDLSYLSPRAPGKGMAYTVINGTLHSAHAKYIRTWIDYGEMKEIKGGRGEYSKAPELLWSQWFDFGPFKIGPNGLLHTGKTFKFPLYLIGAGIIDEDLHELDEAAPIDHPQMPDAKSVLPEDEEIFFGDTGVSKNPIELIQGWFSNWRESVMAIVGIVLLIVVTFLAIKTVRVLNCLWRPRKKRIVRQEVDVESRLNHFEMRGFPEYVKR</sequence>
<comment type="function">
    <text evidence="2">Attaches the virus to host receptors, inducing clathrin-dependent endocytosis of the virion. In the endosome, the acidic pH induces conformational changes in the glycoprotein trimer, which trigger fusion between virus and endosomal membrane.</text>
</comment>
<comment type="subunit">
    <text evidence="2">Homotrimer. Interacts with host LDL at target cell surface.</text>
</comment>
<comment type="subcellular location">
    <subcellularLocation>
        <location evidence="2">Virion membrane</location>
        <topology evidence="2">Single-pass type I membrane protein</topology>
    </subcellularLocation>
    <subcellularLocation>
        <location evidence="2">Host membrane</location>
        <topology evidence="2">Single-pass type I membrane protein</topology>
    </subcellularLocation>
</comment>
<comment type="PTM">
    <text evidence="2">Glycosylated by host. Palmitoylated by host.</text>
</comment>
<comment type="similarity">
    <text evidence="5">Belongs to the vesiculovirus glycoprotein family.</text>
</comment>
<accession>Q85213</accession>
<proteinExistence type="inferred from homology"/>
<name>GLYCO_PIRYV</name>
<feature type="signal peptide" evidence="4">
    <location>
        <begin position="1"/>
        <end position="18"/>
    </location>
</feature>
<feature type="chain" id="PRO_0000287248" description="Glycoprotein">
    <location>
        <begin position="19"/>
        <end position="529"/>
    </location>
</feature>
<feature type="topological domain" description="Virion surface" evidence="4">
    <location>
        <begin position="19"/>
        <end position="469"/>
    </location>
</feature>
<feature type="transmembrane region" description="Helical" evidence="4">
    <location>
        <begin position="470"/>
        <end position="490"/>
    </location>
</feature>
<feature type="topological domain" description="Intravirion" evidence="4">
    <location>
        <begin position="491"/>
        <end position="529"/>
    </location>
</feature>
<feature type="region of interest" description="Fusion peptide" evidence="3">
    <location>
        <begin position="55"/>
        <end position="174"/>
    </location>
</feature>
<feature type="region of interest" description="Trimerization" evidence="3">
    <location>
        <begin position="259"/>
        <end position="313"/>
    </location>
</feature>
<feature type="region of interest" description="Trimerization" evidence="3">
    <location>
        <begin position="388"/>
        <end position="410"/>
    </location>
</feature>
<feature type="site" description="pH sensor in the pre-fusion state" evidence="3">
    <location>
        <position position="78"/>
    </location>
</feature>
<feature type="site" description="pH sensor in the pre-fusion state" evidence="3">
    <location>
        <position position="180"/>
    </location>
</feature>
<feature type="site" description="pH sensor in the pre-fusion state" evidence="3">
    <location>
        <position position="428"/>
    </location>
</feature>
<feature type="glycosylation site" description="N-linked (GlcNAc...) asparagine; by host" evidence="4">
    <location>
        <position position="181"/>
    </location>
</feature>
<feature type="glycosylation site" description="N-linked (GlcNAc...) asparagine; by host" evidence="4">
    <location>
        <position position="340"/>
    </location>
</feature>
<feature type="disulfide bond" evidence="1">
    <location>
        <begin position="42"/>
        <end position="304"/>
    </location>
</feature>
<feature type="disulfide bond" evidence="1">
    <location>
        <begin position="77"/>
        <end position="110"/>
    </location>
</feature>
<feature type="disulfide bond" evidence="1">
    <location>
        <begin position="86"/>
        <end position="132"/>
    </location>
</feature>
<feature type="disulfide bond" evidence="1">
    <location>
        <begin position="171"/>
        <end position="176"/>
    </location>
</feature>
<feature type="disulfide bond" evidence="1">
    <location>
        <begin position="195"/>
        <end position="240"/>
    </location>
</feature>
<feature type="disulfide bond" evidence="1">
    <location>
        <begin position="235"/>
        <end position="273"/>
    </location>
</feature>
<keyword id="KW-1015">Disulfide bond</keyword>
<keyword id="KW-0325">Glycoprotein</keyword>
<keyword id="KW-1043">Host membrane</keyword>
<keyword id="KW-0945">Host-virus interaction</keyword>
<keyword id="KW-0449">Lipoprotein</keyword>
<keyword id="KW-0472">Membrane</keyword>
<keyword id="KW-0564">Palmitate</keyword>
<keyword id="KW-0732">Signal</keyword>
<keyword id="KW-0812">Transmembrane</keyword>
<keyword id="KW-1133">Transmembrane helix</keyword>
<keyword id="KW-1161">Viral attachment to host cell</keyword>
<keyword id="KW-0261">Viral envelope protein</keyword>
<keyword id="KW-0946">Virion</keyword>
<keyword id="KW-1160">Virus entry into host cell</keyword>
<organism>
    <name type="scientific">Piry virus</name>
    <name type="common">PIRYV</name>
    <dbReference type="NCBI Taxonomy" id="11274"/>
    <lineage>
        <taxon>Viruses</taxon>
        <taxon>Riboviria</taxon>
        <taxon>Orthornavirae</taxon>
        <taxon>Negarnaviricota</taxon>
        <taxon>Haploviricotina</taxon>
        <taxon>Monjiviricetes</taxon>
        <taxon>Mononegavirales</taxon>
        <taxon>Rhabdoviridae</taxon>
        <taxon>Alpharhabdovirinae</taxon>
        <taxon>Vesiculovirus</taxon>
        <taxon>Vesiculovirus piry</taxon>
    </lineage>
</organism>
<gene>
    <name type="primary">G</name>
</gene>